<name>MNMA_ACTPJ</name>
<gene>
    <name evidence="1" type="primary">mnmA</name>
    <name type="ordered locus">APJL_0159</name>
</gene>
<sequence>MTNQTQLSSKTYDTHFAKLTAEQLAENAKKKVIIGMSGGVDSSVSAFILQQQGYQVEGLFMKNWEEDDDTDYCTAAADLADAQAVADKLGMKLHKINFAAEYWDNVFEHFLNEYKAGRTPNPDILCNKEIKFKAFLEYAAEDLGADYIATGHYVRRSGDDNNAQLLRGLDANKDQSYFLYTLSHKQVGQSLFPVGDIEKPIVRQIAEDLGLATAKKKDSTGICFIGERKFKDFLARYLPAQPGEIRTVDGKVVGRHDGLMYHTLGQRKGLGIGGVKGLSEDPFYVVEKDLINNVLVVAQGHDNSALLSSGLIATQLHWVDRQPIRENLRCTVKTRYRQTDIACEIQPIDDDTIRVIFDEPQIAVTPGQSAVFYQGDVCLGGGVIEEQLK</sequence>
<organism>
    <name type="scientific">Actinobacillus pleuropneumoniae serotype 3 (strain JL03)</name>
    <dbReference type="NCBI Taxonomy" id="434271"/>
    <lineage>
        <taxon>Bacteria</taxon>
        <taxon>Pseudomonadati</taxon>
        <taxon>Pseudomonadota</taxon>
        <taxon>Gammaproteobacteria</taxon>
        <taxon>Pasteurellales</taxon>
        <taxon>Pasteurellaceae</taxon>
        <taxon>Actinobacillus</taxon>
    </lineage>
</organism>
<feature type="chain" id="PRO_0000349501" description="tRNA-specific 2-thiouridylase MnmA">
    <location>
        <begin position="1"/>
        <end position="389"/>
    </location>
</feature>
<feature type="region of interest" description="Interaction with target base in tRNA" evidence="1">
    <location>
        <begin position="121"/>
        <end position="123"/>
    </location>
</feature>
<feature type="region of interest" description="Interaction with tRNA" evidence="1">
    <location>
        <begin position="173"/>
        <end position="175"/>
    </location>
</feature>
<feature type="region of interest" description="Interaction with tRNA" evidence="1">
    <location>
        <begin position="335"/>
        <end position="336"/>
    </location>
</feature>
<feature type="active site" description="Nucleophile" evidence="1">
    <location>
        <position position="126"/>
    </location>
</feature>
<feature type="active site" description="Cysteine persulfide intermediate" evidence="1">
    <location>
        <position position="223"/>
    </location>
</feature>
<feature type="binding site" evidence="1">
    <location>
        <begin position="35"/>
        <end position="42"/>
    </location>
    <ligand>
        <name>ATP</name>
        <dbReference type="ChEBI" id="CHEBI:30616"/>
    </ligand>
</feature>
<feature type="binding site" evidence="1">
    <location>
        <position position="61"/>
    </location>
    <ligand>
        <name>ATP</name>
        <dbReference type="ChEBI" id="CHEBI:30616"/>
    </ligand>
</feature>
<feature type="binding site" evidence="1">
    <location>
        <position position="151"/>
    </location>
    <ligand>
        <name>ATP</name>
        <dbReference type="ChEBI" id="CHEBI:30616"/>
    </ligand>
</feature>
<feature type="site" description="Interaction with tRNA" evidence="1">
    <location>
        <position position="152"/>
    </location>
</feature>
<feature type="site" description="Interaction with tRNA" evidence="1">
    <location>
        <position position="368"/>
    </location>
</feature>
<feature type="disulfide bond" description="Alternate" evidence="1">
    <location>
        <begin position="126"/>
        <end position="223"/>
    </location>
</feature>
<comment type="function">
    <text evidence="1">Catalyzes the 2-thiolation of uridine at the wobble position (U34) of tRNA, leading to the formation of s(2)U34.</text>
</comment>
<comment type="catalytic activity">
    <reaction evidence="1">
        <text>S-sulfanyl-L-cysteinyl-[protein] + uridine(34) in tRNA + AH2 + ATP = 2-thiouridine(34) in tRNA + L-cysteinyl-[protein] + A + AMP + diphosphate + H(+)</text>
        <dbReference type="Rhea" id="RHEA:47032"/>
        <dbReference type="Rhea" id="RHEA-COMP:10131"/>
        <dbReference type="Rhea" id="RHEA-COMP:11726"/>
        <dbReference type="Rhea" id="RHEA-COMP:11727"/>
        <dbReference type="Rhea" id="RHEA-COMP:11728"/>
        <dbReference type="ChEBI" id="CHEBI:13193"/>
        <dbReference type="ChEBI" id="CHEBI:15378"/>
        <dbReference type="ChEBI" id="CHEBI:17499"/>
        <dbReference type="ChEBI" id="CHEBI:29950"/>
        <dbReference type="ChEBI" id="CHEBI:30616"/>
        <dbReference type="ChEBI" id="CHEBI:33019"/>
        <dbReference type="ChEBI" id="CHEBI:61963"/>
        <dbReference type="ChEBI" id="CHEBI:65315"/>
        <dbReference type="ChEBI" id="CHEBI:87170"/>
        <dbReference type="ChEBI" id="CHEBI:456215"/>
        <dbReference type="EC" id="2.8.1.13"/>
    </reaction>
</comment>
<comment type="subcellular location">
    <subcellularLocation>
        <location evidence="1">Cytoplasm</location>
    </subcellularLocation>
</comment>
<comment type="similarity">
    <text evidence="1">Belongs to the MnmA/TRMU family.</text>
</comment>
<reference key="1">
    <citation type="journal article" date="2008" name="PLoS ONE">
        <title>Genome biology of Actinobacillus pleuropneumoniae JL03, an isolate of serotype 3 prevalent in China.</title>
        <authorList>
            <person name="Xu Z."/>
            <person name="Zhou Y."/>
            <person name="Li L."/>
            <person name="Zhou R."/>
            <person name="Xiao S."/>
            <person name="Wan Y."/>
            <person name="Zhang S."/>
            <person name="Wang K."/>
            <person name="Li W."/>
            <person name="Li L."/>
            <person name="Jin H."/>
            <person name="Kang M."/>
            <person name="Dalai B."/>
            <person name="Li T."/>
            <person name="Liu L."/>
            <person name="Cheng Y."/>
            <person name="Zhang L."/>
            <person name="Xu T."/>
            <person name="Zheng H."/>
            <person name="Pu S."/>
            <person name="Wang B."/>
            <person name="Gu W."/>
            <person name="Zhang X.L."/>
            <person name="Zhu G.-F."/>
            <person name="Wang S."/>
            <person name="Zhao G.-P."/>
            <person name="Chen H."/>
        </authorList>
    </citation>
    <scope>NUCLEOTIDE SEQUENCE [LARGE SCALE GENOMIC DNA]</scope>
    <source>
        <strain>JL03</strain>
    </source>
</reference>
<keyword id="KW-0067">ATP-binding</keyword>
<keyword id="KW-0963">Cytoplasm</keyword>
<keyword id="KW-1015">Disulfide bond</keyword>
<keyword id="KW-0547">Nucleotide-binding</keyword>
<keyword id="KW-0694">RNA-binding</keyword>
<keyword id="KW-0808">Transferase</keyword>
<keyword id="KW-0819">tRNA processing</keyword>
<keyword id="KW-0820">tRNA-binding</keyword>
<protein>
    <recommendedName>
        <fullName evidence="1">tRNA-specific 2-thiouridylase MnmA</fullName>
        <ecNumber evidence="1">2.8.1.13</ecNumber>
    </recommendedName>
</protein>
<dbReference type="EC" id="2.8.1.13" evidence="1"/>
<dbReference type="EMBL" id="CP000687">
    <property type="protein sequence ID" value="ABY68763.1"/>
    <property type="molecule type" value="Genomic_DNA"/>
</dbReference>
<dbReference type="RefSeq" id="WP_012262716.1">
    <property type="nucleotide sequence ID" value="NC_010278.1"/>
</dbReference>
<dbReference type="SMR" id="B0BS63"/>
<dbReference type="KEGG" id="apj:APJL_0159"/>
<dbReference type="HOGENOM" id="CLU_035188_1_0_6"/>
<dbReference type="Proteomes" id="UP000008547">
    <property type="component" value="Chromosome"/>
</dbReference>
<dbReference type="GO" id="GO:0005737">
    <property type="term" value="C:cytoplasm"/>
    <property type="evidence" value="ECO:0007669"/>
    <property type="project" value="UniProtKB-SubCell"/>
</dbReference>
<dbReference type="GO" id="GO:0005524">
    <property type="term" value="F:ATP binding"/>
    <property type="evidence" value="ECO:0007669"/>
    <property type="project" value="UniProtKB-KW"/>
</dbReference>
<dbReference type="GO" id="GO:0000049">
    <property type="term" value="F:tRNA binding"/>
    <property type="evidence" value="ECO:0007669"/>
    <property type="project" value="UniProtKB-KW"/>
</dbReference>
<dbReference type="GO" id="GO:0103016">
    <property type="term" value="F:tRNA-uridine 2-sulfurtransferase activity"/>
    <property type="evidence" value="ECO:0007669"/>
    <property type="project" value="UniProtKB-EC"/>
</dbReference>
<dbReference type="GO" id="GO:0002143">
    <property type="term" value="P:tRNA wobble position uridine thiolation"/>
    <property type="evidence" value="ECO:0007669"/>
    <property type="project" value="TreeGrafter"/>
</dbReference>
<dbReference type="CDD" id="cd01998">
    <property type="entry name" value="MnmA_TRMU-like"/>
    <property type="match status" value="1"/>
</dbReference>
<dbReference type="FunFam" id="2.30.30.280:FF:000001">
    <property type="entry name" value="tRNA-specific 2-thiouridylase MnmA"/>
    <property type="match status" value="1"/>
</dbReference>
<dbReference type="FunFam" id="2.40.30.10:FF:000023">
    <property type="entry name" value="tRNA-specific 2-thiouridylase MnmA"/>
    <property type="match status" value="1"/>
</dbReference>
<dbReference type="FunFam" id="3.40.50.620:FF:000004">
    <property type="entry name" value="tRNA-specific 2-thiouridylase MnmA"/>
    <property type="match status" value="1"/>
</dbReference>
<dbReference type="Gene3D" id="2.30.30.280">
    <property type="entry name" value="Adenine nucleotide alpha hydrolases-like domains"/>
    <property type="match status" value="1"/>
</dbReference>
<dbReference type="Gene3D" id="3.40.50.620">
    <property type="entry name" value="HUPs"/>
    <property type="match status" value="1"/>
</dbReference>
<dbReference type="Gene3D" id="2.40.30.10">
    <property type="entry name" value="Translation factors"/>
    <property type="match status" value="1"/>
</dbReference>
<dbReference type="HAMAP" id="MF_00144">
    <property type="entry name" value="tRNA_thiouridyl_MnmA"/>
    <property type="match status" value="1"/>
</dbReference>
<dbReference type="InterPro" id="IPR004506">
    <property type="entry name" value="MnmA-like"/>
</dbReference>
<dbReference type="InterPro" id="IPR046885">
    <property type="entry name" value="MnmA-like_C"/>
</dbReference>
<dbReference type="InterPro" id="IPR046884">
    <property type="entry name" value="MnmA-like_central"/>
</dbReference>
<dbReference type="InterPro" id="IPR023382">
    <property type="entry name" value="MnmA-like_central_sf"/>
</dbReference>
<dbReference type="InterPro" id="IPR014729">
    <property type="entry name" value="Rossmann-like_a/b/a_fold"/>
</dbReference>
<dbReference type="NCBIfam" id="NF001138">
    <property type="entry name" value="PRK00143.1"/>
    <property type="match status" value="1"/>
</dbReference>
<dbReference type="NCBIfam" id="TIGR00420">
    <property type="entry name" value="trmU"/>
    <property type="match status" value="1"/>
</dbReference>
<dbReference type="PANTHER" id="PTHR11933:SF5">
    <property type="entry name" value="MITOCHONDRIAL TRNA-SPECIFIC 2-THIOURIDYLASE 1"/>
    <property type="match status" value="1"/>
</dbReference>
<dbReference type="PANTHER" id="PTHR11933">
    <property type="entry name" value="TRNA 5-METHYLAMINOMETHYL-2-THIOURIDYLATE -METHYLTRANSFERASE"/>
    <property type="match status" value="1"/>
</dbReference>
<dbReference type="Pfam" id="PF03054">
    <property type="entry name" value="tRNA_Me_trans"/>
    <property type="match status" value="1"/>
</dbReference>
<dbReference type="Pfam" id="PF20258">
    <property type="entry name" value="tRNA_Me_trans_C"/>
    <property type="match status" value="1"/>
</dbReference>
<dbReference type="Pfam" id="PF20259">
    <property type="entry name" value="tRNA_Me_trans_M"/>
    <property type="match status" value="1"/>
</dbReference>
<dbReference type="SUPFAM" id="SSF52402">
    <property type="entry name" value="Adenine nucleotide alpha hydrolases-like"/>
    <property type="match status" value="1"/>
</dbReference>
<accession>B0BS63</accession>
<evidence type="ECO:0000255" key="1">
    <source>
        <dbReference type="HAMAP-Rule" id="MF_00144"/>
    </source>
</evidence>
<proteinExistence type="inferred from homology"/>